<reference key="1">
    <citation type="submission" date="2007-09" db="EMBL/GenBank/DDBJ databases">
        <title>Complete sequence of chromosome of Serratia proteamaculans 568.</title>
        <authorList>
            <consortium name="US DOE Joint Genome Institute"/>
            <person name="Copeland A."/>
            <person name="Lucas S."/>
            <person name="Lapidus A."/>
            <person name="Barry K."/>
            <person name="Glavina del Rio T."/>
            <person name="Dalin E."/>
            <person name="Tice H."/>
            <person name="Pitluck S."/>
            <person name="Chain P."/>
            <person name="Malfatti S."/>
            <person name="Shin M."/>
            <person name="Vergez L."/>
            <person name="Schmutz J."/>
            <person name="Larimer F."/>
            <person name="Land M."/>
            <person name="Hauser L."/>
            <person name="Kyrpides N."/>
            <person name="Kim E."/>
            <person name="Taghavi S."/>
            <person name="Newman L."/>
            <person name="Vangronsveld J."/>
            <person name="van der Lelie D."/>
            <person name="Richardson P."/>
        </authorList>
    </citation>
    <scope>NUCLEOTIDE SEQUENCE [LARGE SCALE GENOMIC DNA]</scope>
    <source>
        <strain>568</strain>
    </source>
</reference>
<accession>A8GIE4</accession>
<gene>
    <name evidence="1" type="primary">pyrH</name>
    <name type="ordered locus">Spro_3788</name>
</gene>
<name>PYRH_SERP5</name>
<protein>
    <recommendedName>
        <fullName evidence="1">Uridylate kinase</fullName>
        <shortName evidence="1">UK</shortName>
        <ecNumber evidence="1">2.7.4.22</ecNumber>
    </recommendedName>
    <alternativeName>
        <fullName evidence="1">Uridine monophosphate kinase</fullName>
        <shortName evidence="1">UMP kinase</shortName>
        <shortName evidence="1">UMPK</shortName>
    </alternativeName>
</protein>
<organism>
    <name type="scientific">Serratia proteamaculans (strain 568)</name>
    <dbReference type="NCBI Taxonomy" id="399741"/>
    <lineage>
        <taxon>Bacteria</taxon>
        <taxon>Pseudomonadati</taxon>
        <taxon>Pseudomonadota</taxon>
        <taxon>Gammaproteobacteria</taxon>
        <taxon>Enterobacterales</taxon>
        <taxon>Yersiniaceae</taxon>
        <taxon>Serratia</taxon>
    </lineage>
</organism>
<evidence type="ECO:0000255" key="1">
    <source>
        <dbReference type="HAMAP-Rule" id="MF_01220"/>
    </source>
</evidence>
<comment type="function">
    <text evidence="1">Catalyzes the reversible phosphorylation of UMP to UDP.</text>
</comment>
<comment type="catalytic activity">
    <reaction evidence="1">
        <text>UMP + ATP = UDP + ADP</text>
        <dbReference type="Rhea" id="RHEA:24400"/>
        <dbReference type="ChEBI" id="CHEBI:30616"/>
        <dbReference type="ChEBI" id="CHEBI:57865"/>
        <dbReference type="ChEBI" id="CHEBI:58223"/>
        <dbReference type="ChEBI" id="CHEBI:456216"/>
        <dbReference type="EC" id="2.7.4.22"/>
    </reaction>
</comment>
<comment type="activity regulation">
    <text evidence="1">Allosterically activated by GTP. Inhibited by UTP.</text>
</comment>
<comment type="pathway">
    <text evidence="1">Pyrimidine metabolism; CTP biosynthesis via de novo pathway; UDP from UMP (UMPK route): step 1/1.</text>
</comment>
<comment type="subunit">
    <text evidence="1">Homohexamer.</text>
</comment>
<comment type="subcellular location">
    <subcellularLocation>
        <location evidence="1">Cytoplasm</location>
    </subcellularLocation>
</comment>
<comment type="similarity">
    <text evidence="1">Belongs to the UMP kinase family.</text>
</comment>
<feature type="chain" id="PRO_1000066743" description="Uridylate kinase">
    <location>
        <begin position="1"/>
        <end position="241"/>
    </location>
</feature>
<feature type="region of interest" description="Involved in allosteric activation by GTP" evidence="1">
    <location>
        <begin position="23"/>
        <end position="28"/>
    </location>
</feature>
<feature type="binding site" evidence="1">
    <location>
        <begin position="15"/>
        <end position="18"/>
    </location>
    <ligand>
        <name>ATP</name>
        <dbReference type="ChEBI" id="CHEBI:30616"/>
    </ligand>
</feature>
<feature type="binding site" evidence="1">
    <location>
        <position position="57"/>
    </location>
    <ligand>
        <name>UMP</name>
        <dbReference type="ChEBI" id="CHEBI:57865"/>
    </ligand>
</feature>
<feature type="binding site" evidence="1">
    <location>
        <position position="58"/>
    </location>
    <ligand>
        <name>ATP</name>
        <dbReference type="ChEBI" id="CHEBI:30616"/>
    </ligand>
</feature>
<feature type="binding site" evidence="1">
    <location>
        <position position="62"/>
    </location>
    <ligand>
        <name>ATP</name>
        <dbReference type="ChEBI" id="CHEBI:30616"/>
    </ligand>
</feature>
<feature type="binding site" evidence="1">
    <location>
        <position position="77"/>
    </location>
    <ligand>
        <name>UMP</name>
        <dbReference type="ChEBI" id="CHEBI:57865"/>
    </ligand>
</feature>
<feature type="binding site" evidence="1">
    <location>
        <begin position="138"/>
        <end position="145"/>
    </location>
    <ligand>
        <name>UMP</name>
        <dbReference type="ChEBI" id="CHEBI:57865"/>
    </ligand>
</feature>
<feature type="binding site" evidence="1">
    <location>
        <position position="165"/>
    </location>
    <ligand>
        <name>ATP</name>
        <dbReference type="ChEBI" id="CHEBI:30616"/>
    </ligand>
</feature>
<feature type="binding site" evidence="1">
    <location>
        <position position="171"/>
    </location>
    <ligand>
        <name>ATP</name>
        <dbReference type="ChEBI" id="CHEBI:30616"/>
    </ligand>
</feature>
<feature type="binding site" evidence="1">
    <location>
        <position position="174"/>
    </location>
    <ligand>
        <name>ATP</name>
        <dbReference type="ChEBI" id="CHEBI:30616"/>
    </ligand>
</feature>
<dbReference type="EC" id="2.7.4.22" evidence="1"/>
<dbReference type="EMBL" id="CP000826">
    <property type="protein sequence ID" value="ABV42884.1"/>
    <property type="molecule type" value="Genomic_DNA"/>
</dbReference>
<dbReference type="SMR" id="A8GIE4"/>
<dbReference type="STRING" id="399741.Spro_3788"/>
<dbReference type="KEGG" id="spe:Spro_3788"/>
<dbReference type="eggNOG" id="COG0528">
    <property type="taxonomic scope" value="Bacteria"/>
</dbReference>
<dbReference type="HOGENOM" id="CLU_033861_0_0_6"/>
<dbReference type="OrthoDB" id="9807458at2"/>
<dbReference type="UniPathway" id="UPA00159">
    <property type="reaction ID" value="UER00275"/>
</dbReference>
<dbReference type="GO" id="GO:0005829">
    <property type="term" value="C:cytosol"/>
    <property type="evidence" value="ECO:0007669"/>
    <property type="project" value="TreeGrafter"/>
</dbReference>
<dbReference type="GO" id="GO:0005524">
    <property type="term" value="F:ATP binding"/>
    <property type="evidence" value="ECO:0007669"/>
    <property type="project" value="UniProtKB-KW"/>
</dbReference>
<dbReference type="GO" id="GO:0033862">
    <property type="term" value="F:UMP kinase activity"/>
    <property type="evidence" value="ECO:0007669"/>
    <property type="project" value="UniProtKB-EC"/>
</dbReference>
<dbReference type="GO" id="GO:0044210">
    <property type="term" value="P:'de novo' CTP biosynthetic process"/>
    <property type="evidence" value="ECO:0007669"/>
    <property type="project" value="UniProtKB-UniRule"/>
</dbReference>
<dbReference type="GO" id="GO:0006225">
    <property type="term" value="P:UDP biosynthetic process"/>
    <property type="evidence" value="ECO:0007669"/>
    <property type="project" value="TreeGrafter"/>
</dbReference>
<dbReference type="CDD" id="cd04254">
    <property type="entry name" value="AAK_UMPK-PyrH-Ec"/>
    <property type="match status" value="1"/>
</dbReference>
<dbReference type="FunFam" id="3.40.1160.10:FF:000001">
    <property type="entry name" value="Uridylate kinase"/>
    <property type="match status" value="1"/>
</dbReference>
<dbReference type="Gene3D" id="3.40.1160.10">
    <property type="entry name" value="Acetylglutamate kinase-like"/>
    <property type="match status" value="1"/>
</dbReference>
<dbReference type="HAMAP" id="MF_01220_B">
    <property type="entry name" value="PyrH_B"/>
    <property type="match status" value="1"/>
</dbReference>
<dbReference type="InterPro" id="IPR036393">
    <property type="entry name" value="AceGlu_kinase-like_sf"/>
</dbReference>
<dbReference type="InterPro" id="IPR001048">
    <property type="entry name" value="Asp/Glu/Uridylate_kinase"/>
</dbReference>
<dbReference type="InterPro" id="IPR011817">
    <property type="entry name" value="Uridylate_kinase"/>
</dbReference>
<dbReference type="InterPro" id="IPR015963">
    <property type="entry name" value="Uridylate_kinase_bac"/>
</dbReference>
<dbReference type="NCBIfam" id="TIGR02075">
    <property type="entry name" value="pyrH_bact"/>
    <property type="match status" value="1"/>
</dbReference>
<dbReference type="PANTHER" id="PTHR42833">
    <property type="entry name" value="URIDYLATE KINASE"/>
    <property type="match status" value="1"/>
</dbReference>
<dbReference type="PANTHER" id="PTHR42833:SF4">
    <property type="entry name" value="URIDYLATE KINASE PUMPKIN, CHLOROPLASTIC"/>
    <property type="match status" value="1"/>
</dbReference>
<dbReference type="Pfam" id="PF00696">
    <property type="entry name" value="AA_kinase"/>
    <property type="match status" value="1"/>
</dbReference>
<dbReference type="PIRSF" id="PIRSF005650">
    <property type="entry name" value="Uridylate_kin"/>
    <property type="match status" value="1"/>
</dbReference>
<dbReference type="SUPFAM" id="SSF53633">
    <property type="entry name" value="Carbamate kinase-like"/>
    <property type="match status" value="1"/>
</dbReference>
<proteinExistence type="inferred from homology"/>
<sequence length="241" mass="25962">MATNAKPVYQRILLKLSGEALQGAEGFGIDASVLDRMAQEVKELVELGIQVGVVIGGGNLFRGAGLAQAGMNRVVGDHMGMLATVMNGLAMRDALHRAYVNARLMSAIPLNGVCDNYSWAEAISLLRNNRVVIFSAGTGNPFFTTDSAACLRGIEIEADVVLKATKVDGVYSADPVKNPDATLYEHITYQDVLERELKVMDLAAFTLARDHGLPIRVFNMNKPGALRRVVMGENEGTLISK</sequence>
<keyword id="KW-0021">Allosteric enzyme</keyword>
<keyword id="KW-0067">ATP-binding</keyword>
<keyword id="KW-0963">Cytoplasm</keyword>
<keyword id="KW-0418">Kinase</keyword>
<keyword id="KW-0547">Nucleotide-binding</keyword>
<keyword id="KW-0665">Pyrimidine biosynthesis</keyword>
<keyword id="KW-0808">Transferase</keyword>